<name>ALR_RALPJ</name>
<sequence length="374" mass="40066">MPRPIQAVIHGPALANNLQIARRHAPNSRVWAVVKANAYGHGIERVYEGLRQTDGFGLLDLDEAVRLRQLGWQGPVLLLEGFFKPEDLAIVEQYRLTTTVHCEEQLRMLELARLKGPTSVQLKINTGMSRLGFAPAAYRAAWERARAISGVGTIVHMTHFSDADGPRGIEHQLAAFERATQGLPGEASLSNSAATLWHPKAHRDWVRPGVIMYGASPTGVAADIDGTGLMPAMSLKSELIAIQDLQPGATIGYGSRFTVEHPMRIGVVACGYADGYPRHAPGWDGNHTPVLVDGVRTHIVGRVSMDMITVDLAGVPEARVGTPVTLWGEGLPIDDVAQASGTVGYELMCALAPRVPVLVEPVGTAEAGDLGKAA</sequence>
<feature type="chain" id="PRO_1000138615" description="Alanine racemase">
    <location>
        <begin position="1"/>
        <end position="374"/>
    </location>
</feature>
<feature type="active site" description="Proton acceptor; specific for D-alanine" evidence="1">
    <location>
        <position position="35"/>
    </location>
</feature>
<feature type="active site" description="Proton acceptor; specific for L-alanine" evidence="1">
    <location>
        <position position="253"/>
    </location>
</feature>
<feature type="binding site" evidence="1">
    <location>
        <position position="130"/>
    </location>
    <ligand>
        <name>substrate</name>
    </ligand>
</feature>
<feature type="binding site" evidence="1">
    <location>
        <position position="305"/>
    </location>
    <ligand>
        <name>substrate</name>
    </ligand>
</feature>
<feature type="modified residue" description="N6-(pyridoxal phosphate)lysine" evidence="1">
    <location>
        <position position="35"/>
    </location>
</feature>
<gene>
    <name type="primary">alr</name>
    <name type="ordered locus">Rpic_1244</name>
</gene>
<comment type="function">
    <text evidence="1">Catalyzes the interconversion of L-alanine and D-alanine. May also act on other amino acids.</text>
</comment>
<comment type="catalytic activity">
    <reaction evidence="1">
        <text>L-alanine = D-alanine</text>
        <dbReference type="Rhea" id="RHEA:20249"/>
        <dbReference type="ChEBI" id="CHEBI:57416"/>
        <dbReference type="ChEBI" id="CHEBI:57972"/>
        <dbReference type="EC" id="5.1.1.1"/>
    </reaction>
</comment>
<comment type="cofactor">
    <cofactor evidence="1">
        <name>pyridoxal 5'-phosphate</name>
        <dbReference type="ChEBI" id="CHEBI:597326"/>
    </cofactor>
</comment>
<comment type="pathway">
    <text evidence="1">Amino-acid biosynthesis; D-alanine biosynthesis; D-alanine from L-alanine: step 1/1.</text>
</comment>
<comment type="similarity">
    <text evidence="1">Belongs to the alanine racemase family.</text>
</comment>
<protein>
    <recommendedName>
        <fullName evidence="1">Alanine racemase</fullName>
        <ecNumber evidence="1">5.1.1.1</ecNumber>
    </recommendedName>
</protein>
<reference key="1">
    <citation type="submission" date="2008-05" db="EMBL/GenBank/DDBJ databases">
        <title>Complete sequence of chromosome 1 of Ralstonia pickettii 12J.</title>
        <authorList>
            <person name="Lucas S."/>
            <person name="Copeland A."/>
            <person name="Lapidus A."/>
            <person name="Glavina del Rio T."/>
            <person name="Dalin E."/>
            <person name="Tice H."/>
            <person name="Bruce D."/>
            <person name="Goodwin L."/>
            <person name="Pitluck S."/>
            <person name="Meincke L."/>
            <person name="Brettin T."/>
            <person name="Detter J.C."/>
            <person name="Han C."/>
            <person name="Kuske C.R."/>
            <person name="Schmutz J."/>
            <person name="Larimer F."/>
            <person name="Land M."/>
            <person name="Hauser L."/>
            <person name="Kyrpides N."/>
            <person name="Mikhailova N."/>
            <person name="Marsh T."/>
            <person name="Richardson P."/>
        </authorList>
    </citation>
    <scope>NUCLEOTIDE SEQUENCE [LARGE SCALE GENOMIC DNA]</scope>
    <source>
        <strain>12J</strain>
    </source>
</reference>
<accession>B2UAX2</accession>
<dbReference type="EC" id="5.1.1.1" evidence="1"/>
<dbReference type="EMBL" id="CP001068">
    <property type="protein sequence ID" value="ACD26388.1"/>
    <property type="molecule type" value="Genomic_DNA"/>
</dbReference>
<dbReference type="SMR" id="B2UAX2"/>
<dbReference type="STRING" id="402626.Rpic_1244"/>
<dbReference type="KEGG" id="rpi:Rpic_1244"/>
<dbReference type="PATRIC" id="fig|402626.5.peg.2447"/>
<dbReference type="eggNOG" id="COG0787">
    <property type="taxonomic scope" value="Bacteria"/>
</dbReference>
<dbReference type="HOGENOM" id="CLU_028393_1_0_4"/>
<dbReference type="UniPathway" id="UPA00042">
    <property type="reaction ID" value="UER00497"/>
</dbReference>
<dbReference type="GO" id="GO:0005829">
    <property type="term" value="C:cytosol"/>
    <property type="evidence" value="ECO:0007669"/>
    <property type="project" value="TreeGrafter"/>
</dbReference>
<dbReference type="GO" id="GO:0008784">
    <property type="term" value="F:alanine racemase activity"/>
    <property type="evidence" value="ECO:0007669"/>
    <property type="project" value="UniProtKB-UniRule"/>
</dbReference>
<dbReference type="GO" id="GO:0030170">
    <property type="term" value="F:pyridoxal phosphate binding"/>
    <property type="evidence" value="ECO:0007669"/>
    <property type="project" value="UniProtKB-UniRule"/>
</dbReference>
<dbReference type="GO" id="GO:0030632">
    <property type="term" value="P:D-alanine biosynthetic process"/>
    <property type="evidence" value="ECO:0007669"/>
    <property type="project" value="UniProtKB-UniRule"/>
</dbReference>
<dbReference type="CDD" id="cd06827">
    <property type="entry name" value="PLPDE_III_AR_proteobact"/>
    <property type="match status" value="1"/>
</dbReference>
<dbReference type="FunFam" id="3.20.20.10:FF:000002">
    <property type="entry name" value="Alanine racemase"/>
    <property type="match status" value="1"/>
</dbReference>
<dbReference type="Gene3D" id="3.20.20.10">
    <property type="entry name" value="Alanine racemase"/>
    <property type="match status" value="1"/>
</dbReference>
<dbReference type="Gene3D" id="2.40.37.10">
    <property type="entry name" value="Lyase, Ornithine Decarboxylase, Chain A, domain 1"/>
    <property type="match status" value="1"/>
</dbReference>
<dbReference type="HAMAP" id="MF_01201">
    <property type="entry name" value="Ala_racemase"/>
    <property type="match status" value="1"/>
</dbReference>
<dbReference type="InterPro" id="IPR000821">
    <property type="entry name" value="Ala_racemase"/>
</dbReference>
<dbReference type="InterPro" id="IPR009006">
    <property type="entry name" value="Ala_racemase/Decarboxylase_C"/>
</dbReference>
<dbReference type="InterPro" id="IPR011079">
    <property type="entry name" value="Ala_racemase_C"/>
</dbReference>
<dbReference type="InterPro" id="IPR001608">
    <property type="entry name" value="Ala_racemase_N"/>
</dbReference>
<dbReference type="InterPro" id="IPR020622">
    <property type="entry name" value="Ala_racemase_pyridoxalP-BS"/>
</dbReference>
<dbReference type="InterPro" id="IPR029066">
    <property type="entry name" value="PLP-binding_barrel"/>
</dbReference>
<dbReference type="NCBIfam" id="TIGR00492">
    <property type="entry name" value="alr"/>
    <property type="match status" value="1"/>
</dbReference>
<dbReference type="PANTHER" id="PTHR30511">
    <property type="entry name" value="ALANINE RACEMASE"/>
    <property type="match status" value="1"/>
</dbReference>
<dbReference type="PANTHER" id="PTHR30511:SF0">
    <property type="entry name" value="ALANINE RACEMASE, CATABOLIC-RELATED"/>
    <property type="match status" value="1"/>
</dbReference>
<dbReference type="Pfam" id="PF00842">
    <property type="entry name" value="Ala_racemase_C"/>
    <property type="match status" value="1"/>
</dbReference>
<dbReference type="Pfam" id="PF01168">
    <property type="entry name" value="Ala_racemase_N"/>
    <property type="match status" value="1"/>
</dbReference>
<dbReference type="PRINTS" id="PR00992">
    <property type="entry name" value="ALARACEMASE"/>
</dbReference>
<dbReference type="SMART" id="SM01005">
    <property type="entry name" value="Ala_racemase_C"/>
    <property type="match status" value="1"/>
</dbReference>
<dbReference type="SUPFAM" id="SSF50621">
    <property type="entry name" value="Alanine racemase C-terminal domain-like"/>
    <property type="match status" value="1"/>
</dbReference>
<dbReference type="SUPFAM" id="SSF51419">
    <property type="entry name" value="PLP-binding barrel"/>
    <property type="match status" value="1"/>
</dbReference>
<dbReference type="PROSITE" id="PS00395">
    <property type="entry name" value="ALANINE_RACEMASE"/>
    <property type="match status" value="1"/>
</dbReference>
<organism>
    <name type="scientific">Ralstonia pickettii (strain 12J)</name>
    <dbReference type="NCBI Taxonomy" id="402626"/>
    <lineage>
        <taxon>Bacteria</taxon>
        <taxon>Pseudomonadati</taxon>
        <taxon>Pseudomonadota</taxon>
        <taxon>Betaproteobacteria</taxon>
        <taxon>Burkholderiales</taxon>
        <taxon>Burkholderiaceae</taxon>
        <taxon>Ralstonia</taxon>
    </lineage>
</organism>
<proteinExistence type="inferred from homology"/>
<keyword id="KW-0413">Isomerase</keyword>
<keyword id="KW-0663">Pyridoxal phosphate</keyword>
<evidence type="ECO:0000255" key="1">
    <source>
        <dbReference type="HAMAP-Rule" id="MF_01201"/>
    </source>
</evidence>